<dbReference type="EMBL" id="CP000713">
    <property type="protein sequence ID" value="ABQ93402.1"/>
    <property type="molecule type" value="Genomic_DNA"/>
</dbReference>
<dbReference type="SMR" id="A5WCL1"/>
<dbReference type="STRING" id="349106.PsycPRwf_0447"/>
<dbReference type="KEGG" id="prw:PsycPRwf_0447"/>
<dbReference type="eggNOG" id="COG0099">
    <property type="taxonomic scope" value="Bacteria"/>
</dbReference>
<dbReference type="HOGENOM" id="CLU_103849_1_2_6"/>
<dbReference type="GO" id="GO:0005829">
    <property type="term" value="C:cytosol"/>
    <property type="evidence" value="ECO:0007669"/>
    <property type="project" value="TreeGrafter"/>
</dbReference>
<dbReference type="GO" id="GO:0015935">
    <property type="term" value="C:small ribosomal subunit"/>
    <property type="evidence" value="ECO:0007669"/>
    <property type="project" value="TreeGrafter"/>
</dbReference>
<dbReference type="GO" id="GO:0019843">
    <property type="term" value="F:rRNA binding"/>
    <property type="evidence" value="ECO:0007669"/>
    <property type="project" value="UniProtKB-UniRule"/>
</dbReference>
<dbReference type="GO" id="GO:0003735">
    <property type="term" value="F:structural constituent of ribosome"/>
    <property type="evidence" value="ECO:0007669"/>
    <property type="project" value="InterPro"/>
</dbReference>
<dbReference type="GO" id="GO:0000049">
    <property type="term" value="F:tRNA binding"/>
    <property type="evidence" value="ECO:0007669"/>
    <property type="project" value="UniProtKB-UniRule"/>
</dbReference>
<dbReference type="GO" id="GO:0006412">
    <property type="term" value="P:translation"/>
    <property type="evidence" value="ECO:0007669"/>
    <property type="project" value="UniProtKB-UniRule"/>
</dbReference>
<dbReference type="FunFam" id="1.10.8.50:FF:000001">
    <property type="entry name" value="30S ribosomal protein S13"/>
    <property type="match status" value="1"/>
</dbReference>
<dbReference type="FunFam" id="4.10.910.10:FF:000001">
    <property type="entry name" value="30S ribosomal protein S13"/>
    <property type="match status" value="1"/>
</dbReference>
<dbReference type="Gene3D" id="1.10.8.50">
    <property type="match status" value="1"/>
</dbReference>
<dbReference type="Gene3D" id="4.10.910.10">
    <property type="entry name" value="30s ribosomal protein s13, domain 2"/>
    <property type="match status" value="1"/>
</dbReference>
<dbReference type="HAMAP" id="MF_01315">
    <property type="entry name" value="Ribosomal_uS13"/>
    <property type="match status" value="1"/>
</dbReference>
<dbReference type="InterPro" id="IPR027437">
    <property type="entry name" value="Rbsml_uS13_C"/>
</dbReference>
<dbReference type="InterPro" id="IPR001892">
    <property type="entry name" value="Ribosomal_uS13"/>
</dbReference>
<dbReference type="InterPro" id="IPR010979">
    <property type="entry name" value="Ribosomal_uS13-like_H2TH"/>
</dbReference>
<dbReference type="InterPro" id="IPR019980">
    <property type="entry name" value="Ribosomal_uS13_bac-type"/>
</dbReference>
<dbReference type="InterPro" id="IPR018269">
    <property type="entry name" value="Ribosomal_uS13_CS"/>
</dbReference>
<dbReference type="NCBIfam" id="TIGR03631">
    <property type="entry name" value="uS13_bact"/>
    <property type="match status" value="1"/>
</dbReference>
<dbReference type="PANTHER" id="PTHR10871">
    <property type="entry name" value="30S RIBOSOMAL PROTEIN S13/40S RIBOSOMAL PROTEIN S18"/>
    <property type="match status" value="1"/>
</dbReference>
<dbReference type="PANTHER" id="PTHR10871:SF1">
    <property type="entry name" value="SMALL RIBOSOMAL SUBUNIT PROTEIN US13M"/>
    <property type="match status" value="1"/>
</dbReference>
<dbReference type="Pfam" id="PF00416">
    <property type="entry name" value="Ribosomal_S13"/>
    <property type="match status" value="1"/>
</dbReference>
<dbReference type="PIRSF" id="PIRSF002134">
    <property type="entry name" value="Ribosomal_S13"/>
    <property type="match status" value="1"/>
</dbReference>
<dbReference type="SUPFAM" id="SSF46946">
    <property type="entry name" value="S13-like H2TH domain"/>
    <property type="match status" value="1"/>
</dbReference>
<dbReference type="PROSITE" id="PS00646">
    <property type="entry name" value="RIBOSOMAL_S13_1"/>
    <property type="match status" value="1"/>
</dbReference>
<dbReference type="PROSITE" id="PS50159">
    <property type="entry name" value="RIBOSOMAL_S13_2"/>
    <property type="match status" value="1"/>
</dbReference>
<protein>
    <recommendedName>
        <fullName evidence="1">Small ribosomal subunit protein uS13</fullName>
    </recommendedName>
    <alternativeName>
        <fullName evidence="3">30S ribosomal protein S13</fullName>
    </alternativeName>
</protein>
<evidence type="ECO:0000255" key="1">
    <source>
        <dbReference type="HAMAP-Rule" id="MF_01315"/>
    </source>
</evidence>
<evidence type="ECO:0000256" key="2">
    <source>
        <dbReference type="SAM" id="MobiDB-lite"/>
    </source>
</evidence>
<evidence type="ECO:0000305" key="3"/>
<organism>
    <name type="scientific">Psychrobacter sp. (strain PRwf-1)</name>
    <dbReference type="NCBI Taxonomy" id="349106"/>
    <lineage>
        <taxon>Bacteria</taxon>
        <taxon>Pseudomonadati</taxon>
        <taxon>Pseudomonadota</taxon>
        <taxon>Gammaproteobacteria</taxon>
        <taxon>Moraxellales</taxon>
        <taxon>Moraxellaceae</taxon>
        <taxon>Psychrobacter</taxon>
    </lineage>
</organism>
<sequence length="118" mass="13211">MARIAGVNIPDNKHAVISLTYIFGIGRTTAKKILDTVGIAPTTKISQLDDAQLDAIRAEVGNYMTEGDLRREVSMNIKRLVDLGCYRGIRHRRNLPVRGQNTKNNARTRKGPIRSIKR</sequence>
<reference key="1">
    <citation type="submission" date="2007-05" db="EMBL/GenBank/DDBJ databases">
        <title>Complete sequence of chromosome of Psychrobacter sp. PRwf-1.</title>
        <authorList>
            <consortium name="US DOE Joint Genome Institute"/>
            <person name="Copeland A."/>
            <person name="Lucas S."/>
            <person name="Lapidus A."/>
            <person name="Barry K."/>
            <person name="Detter J.C."/>
            <person name="Glavina del Rio T."/>
            <person name="Hammon N."/>
            <person name="Israni S."/>
            <person name="Dalin E."/>
            <person name="Tice H."/>
            <person name="Pitluck S."/>
            <person name="Chain P."/>
            <person name="Malfatti S."/>
            <person name="Shin M."/>
            <person name="Vergez L."/>
            <person name="Schmutz J."/>
            <person name="Larimer F."/>
            <person name="Land M."/>
            <person name="Hauser L."/>
            <person name="Kyrpides N."/>
            <person name="Kim E."/>
            <person name="Tiedje J."/>
            <person name="Richardson P."/>
        </authorList>
    </citation>
    <scope>NUCLEOTIDE SEQUENCE [LARGE SCALE GENOMIC DNA]</scope>
    <source>
        <strain>PRwf-1</strain>
    </source>
</reference>
<name>RS13_PSYWF</name>
<keyword id="KW-0687">Ribonucleoprotein</keyword>
<keyword id="KW-0689">Ribosomal protein</keyword>
<keyword id="KW-0694">RNA-binding</keyword>
<keyword id="KW-0699">rRNA-binding</keyword>
<keyword id="KW-0820">tRNA-binding</keyword>
<proteinExistence type="inferred from homology"/>
<feature type="chain" id="PRO_1000073213" description="Small ribosomal subunit protein uS13">
    <location>
        <begin position="1"/>
        <end position="118"/>
    </location>
</feature>
<feature type="region of interest" description="Disordered" evidence="2">
    <location>
        <begin position="94"/>
        <end position="118"/>
    </location>
</feature>
<feature type="compositionally biased region" description="Basic residues" evidence="2">
    <location>
        <begin position="106"/>
        <end position="118"/>
    </location>
</feature>
<comment type="function">
    <text evidence="1">Located at the top of the head of the 30S subunit, it contacts several helices of the 16S rRNA. In the 70S ribosome it contacts the 23S rRNA (bridge B1a) and protein L5 of the 50S subunit (bridge B1b), connecting the 2 subunits; these bridges are implicated in subunit movement. Contacts the tRNAs in the A and P-sites.</text>
</comment>
<comment type="subunit">
    <text evidence="1">Part of the 30S ribosomal subunit. Forms a loose heterodimer with protein S19. Forms two bridges to the 50S subunit in the 70S ribosome.</text>
</comment>
<comment type="similarity">
    <text evidence="1">Belongs to the universal ribosomal protein uS13 family.</text>
</comment>
<gene>
    <name evidence="1" type="primary">rpsM</name>
    <name type="ordered locus">PsycPRwf_0447</name>
</gene>
<accession>A5WCL1</accession>